<keyword id="KW-0965">Cell junction</keyword>
<keyword id="KW-1003">Cell membrane</keyword>
<keyword id="KW-0903">Direct protein sequencing</keyword>
<keyword id="KW-0472">Membrane</keyword>
<keyword id="KW-0597">Phosphoprotein</keyword>
<keyword id="KW-1185">Reference proteome</keyword>
<keyword id="KW-0796">Tight junction</keyword>
<keyword id="KW-0812">Transmembrane</keyword>
<keyword id="KW-1133">Transmembrane helix</keyword>
<name>CLD11_MOUSE</name>
<comment type="function">
    <text evidence="1">Plays a major role in tight junction-specific obliteration of the intercellular space, through calcium-independent cell-adhesion activity.</text>
</comment>
<comment type="subunit">
    <text evidence="1 4">Interacts with tetraspanin-3/TSPAN3 (PubMed:11309411). Interacts with OCLN (By similarity).</text>
</comment>
<comment type="interaction">
    <interactant intactId="EBI-309095">
        <id>Q60771</id>
    </interactant>
    <interactant intactId="EBI-777188">
        <id>P07141</id>
        <label>Csf1</label>
    </interactant>
    <organismsDiffer>false</organismsDiffer>
    <experiments>2</experiments>
</comment>
<comment type="subcellular location">
    <subcellularLocation>
        <location evidence="5">Cell junction</location>
        <location evidence="5">Tight junction</location>
    </subcellularLocation>
    <subcellularLocation>
        <location evidence="1">Cell membrane</location>
        <topology evidence="3">Multi-pass membrane protein</topology>
    </subcellularLocation>
</comment>
<comment type="similarity">
    <text evidence="6">Belongs to the claudin family.</text>
</comment>
<accession>Q60771</accession>
<accession>Q545N5</accession>
<accession>Q9DB65</accession>
<feature type="chain" id="PRO_0000144762" description="Claudin-11">
    <location>
        <begin position="1"/>
        <end position="207"/>
    </location>
</feature>
<feature type="topological domain" description="Cytoplasmic" evidence="3">
    <location>
        <position position="1"/>
    </location>
</feature>
<feature type="transmembrane region" description="Helical" evidence="3">
    <location>
        <begin position="2"/>
        <end position="22"/>
    </location>
</feature>
<feature type="topological domain" description="Extracellular" evidence="3">
    <location>
        <begin position="23"/>
        <end position="82"/>
    </location>
</feature>
<feature type="transmembrane region" description="Helical" evidence="3">
    <location>
        <begin position="83"/>
        <end position="103"/>
    </location>
</feature>
<feature type="topological domain" description="Cytoplasmic" evidence="3">
    <location>
        <begin position="104"/>
        <end position="122"/>
    </location>
</feature>
<feature type="transmembrane region" description="Helical" evidence="3">
    <location>
        <begin position="123"/>
        <end position="143"/>
    </location>
</feature>
<feature type="topological domain" description="Extracellular" evidence="3">
    <location>
        <begin position="144"/>
        <end position="157"/>
    </location>
</feature>
<feature type="transmembrane region" description="Helical" evidence="3">
    <location>
        <begin position="158"/>
        <end position="178"/>
    </location>
</feature>
<feature type="topological domain" description="Cytoplasmic" evidence="3">
    <location>
        <begin position="179"/>
        <end position="207"/>
    </location>
</feature>
<feature type="modified residue" description="Phosphoserine" evidence="2">
    <location>
        <position position="193"/>
    </location>
</feature>
<feature type="modified residue" description="Phosphoserine" evidence="7">
    <location>
        <position position="194"/>
    </location>
</feature>
<feature type="modified residue" description="Phosphoserine" evidence="7">
    <location>
        <position position="197"/>
    </location>
</feature>
<feature type="modified residue" description="Phosphoserine" evidence="7">
    <location>
        <position position="198"/>
    </location>
</feature>
<feature type="sequence conflict" description="In Ref. 3; BAB23860." evidence="6" ref="3">
    <original>S</original>
    <variation>C</variation>
    <location>
        <position position="196"/>
    </location>
</feature>
<gene>
    <name type="primary">Cldn11</name>
    <name type="synonym">Osp</name>
    <name type="synonym">Otm</name>
</gene>
<evidence type="ECO:0000250" key="1">
    <source>
        <dbReference type="UniProtKB" id="O75508"/>
    </source>
</evidence>
<evidence type="ECO:0000250" key="2">
    <source>
        <dbReference type="UniProtKB" id="Q99P82"/>
    </source>
</evidence>
<evidence type="ECO:0000255" key="3"/>
<evidence type="ECO:0000269" key="4">
    <source>
    </source>
</evidence>
<evidence type="ECO:0000269" key="5">
    <source>
    </source>
</evidence>
<evidence type="ECO:0000305" key="6"/>
<evidence type="ECO:0007744" key="7">
    <source>
    </source>
</evidence>
<protein>
    <recommendedName>
        <fullName>Claudin-11</fullName>
    </recommendedName>
    <alternativeName>
        <fullName>Oligodendrocyte transmembrane protein</fullName>
    </alternativeName>
    <alternativeName>
        <fullName>Oligodendrocyte-specific protein</fullName>
    </alternativeName>
</protein>
<organism>
    <name type="scientific">Mus musculus</name>
    <name type="common">Mouse</name>
    <dbReference type="NCBI Taxonomy" id="10090"/>
    <lineage>
        <taxon>Eukaryota</taxon>
        <taxon>Metazoa</taxon>
        <taxon>Chordata</taxon>
        <taxon>Craniata</taxon>
        <taxon>Vertebrata</taxon>
        <taxon>Euteleostomi</taxon>
        <taxon>Mammalia</taxon>
        <taxon>Eutheria</taxon>
        <taxon>Euarchontoglires</taxon>
        <taxon>Glires</taxon>
        <taxon>Rodentia</taxon>
        <taxon>Myomorpha</taxon>
        <taxon>Muroidea</taxon>
        <taxon>Muridae</taxon>
        <taxon>Murinae</taxon>
        <taxon>Mus</taxon>
        <taxon>Mus</taxon>
    </lineage>
</organism>
<dbReference type="EMBL" id="U19582">
    <property type="protein sequence ID" value="AAB50270.1"/>
    <property type="molecule type" value="mRNA"/>
</dbReference>
<dbReference type="EMBL" id="AF124426">
    <property type="protein sequence ID" value="AAD17321.1"/>
    <property type="molecule type" value="mRNA"/>
</dbReference>
<dbReference type="EMBL" id="AK005088">
    <property type="protein sequence ID" value="BAB23810.1"/>
    <property type="molecule type" value="mRNA"/>
</dbReference>
<dbReference type="EMBL" id="AK005171">
    <property type="protein sequence ID" value="BAB23860.1"/>
    <property type="molecule type" value="mRNA"/>
</dbReference>
<dbReference type="EMBL" id="AK161698">
    <property type="protein sequence ID" value="BAE36538.1"/>
    <property type="molecule type" value="mRNA"/>
</dbReference>
<dbReference type="EMBL" id="BC021659">
    <property type="protein sequence ID" value="AAH21659.1"/>
    <property type="molecule type" value="mRNA"/>
</dbReference>
<dbReference type="CCDS" id="CCDS17290.1"/>
<dbReference type="RefSeq" id="NP_032796.1">
    <property type="nucleotide sequence ID" value="NM_008770.3"/>
</dbReference>
<dbReference type="SMR" id="Q60771"/>
<dbReference type="BioGRID" id="201987">
    <property type="interactions" value="5"/>
</dbReference>
<dbReference type="CORUM" id="Q60771"/>
<dbReference type="FunCoup" id="Q60771">
    <property type="interactions" value="362"/>
</dbReference>
<dbReference type="IntAct" id="Q60771">
    <property type="interactions" value="4"/>
</dbReference>
<dbReference type="MINT" id="Q60771"/>
<dbReference type="STRING" id="10090.ENSMUSP00000042181"/>
<dbReference type="GlyGen" id="Q60771">
    <property type="glycosylation" value="1 site, 1 O-linked glycan (1 site)"/>
</dbReference>
<dbReference type="iPTMnet" id="Q60771"/>
<dbReference type="PhosphoSitePlus" id="Q60771"/>
<dbReference type="SwissPalm" id="Q60771"/>
<dbReference type="PaxDb" id="10090-ENSMUSP00000042181"/>
<dbReference type="PeptideAtlas" id="Q60771"/>
<dbReference type="ProteomicsDB" id="283289"/>
<dbReference type="Antibodypedia" id="2785">
    <property type="antibodies" value="355 antibodies from 38 providers"/>
</dbReference>
<dbReference type="DNASU" id="18417"/>
<dbReference type="Ensembl" id="ENSMUST00000046174.8">
    <property type="protein sequence ID" value="ENSMUSP00000042181.7"/>
    <property type="gene ID" value="ENSMUSG00000037625.8"/>
</dbReference>
<dbReference type="GeneID" id="18417"/>
<dbReference type="KEGG" id="mmu:18417"/>
<dbReference type="UCSC" id="uc008ovw.2">
    <property type="organism name" value="mouse"/>
</dbReference>
<dbReference type="AGR" id="MGI:106925"/>
<dbReference type="CTD" id="5010"/>
<dbReference type="MGI" id="MGI:106925">
    <property type="gene designation" value="Cldn11"/>
</dbReference>
<dbReference type="VEuPathDB" id="HostDB:ENSMUSG00000037625"/>
<dbReference type="eggNOG" id="ENOG502QSDJ">
    <property type="taxonomic scope" value="Eukaryota"/>
</dbReference>
<dbReference type="GeneTree" id="ENSGT00890000139496"/>
<dbReference type="HOGENOM" id="CLU_094997_0_0_1"/>
<dbReference type="InParanoid" id="Q60771"/>
<dbReference type="OMA" id="SYQDNNH"/>
<dbReference type="OrthoDB" id="9411914at2759"/>
<dbReference type="PhylomeDB" id="Q60771"/>
<dbReference type="TreeFam" id="TF331936"/>
<dbReference type="BioGRID-ORCS" id="18417">
    <property type="hits" value="3 hits in 78 CRISPR screens"/>
</dbReference>
<dbReference type="PRO" id="PR:Q60771"/>
<dbReference type="Proteomes" id="UP000000589">
    <property type="component" value="Chromosome 3"/>
</dbReference>
<dbReference type="RNAct" id="Q60771">
    <property type="molecule type" value="protein"/>
</dbReference>
<dbReference type="Bgee" id="ENSMUSG00000037625">
    <property type="expression patterns" value="Expressed in ventral tegmental area and 167 other cell types or tissues"/>
</dbReference>
<dbReference type="GO" id="GO:0030424">
    <property type="term" value="C:axon"/>
    <property type="evidence" value="ECO:0007669"/>
    <property type="project" value="Ensembl"/>
</dbReference>
<dbReference type="GO" id="GO:0045178">
    <property type="term" value="C:basal part of cell"/>
    <property type="evidence" value="ECO:0000314"/>
    <property type="project" value="MGI"/>
</dbReference>
<dbReference type="GO" id="GO:0005923">
    <property type="term" value="C:bicellular tight junction"/>
    <property type="evidence" value="ECO:0000314"/>
    <property type="project" value="MGI"/>
</dbReference>
<dbReference type="GO" id="GO:0005811">
    <property type="term" value="C:lipid droplet"/>
    <property type="evidence" value="ECO:0007669"/>
    <property type="project" value="Ensembl"/>
</dbReference>
<dbReference type="GO" id="GO:0043209">
    <property type="term" value="C:myelin sheath"/>
    <property type="evidence" value="ECO:0007005"/>
    <property type="project" value="UniProtKB"/>
</dbReference>
<dbReference type="GO" id="GO:0005883">
    <property type="term" value="C:neurofilament"/>
    <property type="evidence" value="ECO:0007669"/>
    <property type="project" value="Ensembl"/>
</dbReference>
<dbReference type="GO" id="GO:0005886">
    <property type="term" value="C:plasma membrane"/>
    <property type="evidence" value="ECO:0000304"/>
    <property type="project" value="MGI"/>
</dbReference>
<dbReference type="GO" id="GO:0070160">
    <property type="term" value="C:tight junction"/>
    <property type="evidence" value="ECO:0000314"/>
    <property type="project" value="ARUK-UCL"/>
</dbReference>
<dbReference type="GO" id="GO:0042802">
    <property type="term" value="F:identical protein binding"/>
    <property type="evidence" value="ECO:0000250"/>
    <property type="project" value="UniProtKB"/>
</dbReference>
<dbReference type="GO" id="GO:0005198">
    <property type="term" value="F:structural molecule activity"/>
    <property type="evidence" value="ECO:0007669"/>
    <property type="project" value="InterPro"/>
</dbReference>
<dbReference type="GO" id="GO:0008366">
    <property type="term" value="P:axon ensheathment"/>
    <property type="evidence" value="ECO:0000315"/>
    <property type="project" value="MGI"/>
</dbReference>
<dbReference type="GO" id="GO:0016338">
    <property type="term" value="P:calcium-independent cell-cell adhesion via plasma membrane cell-adhesion molecules"/>
    <property type="evidence" value="ECO:0000250"/>
    <property type="project" value="UniProtKB"/>
</dbReference>
<dbReference type="GO" id="GO:0007155">
    <property type="term" value="P:cell adhesion"/>
    <property type="evidence" value="ECO:0000315"/>
    <property type="project" value="MGI"/>
</dbReference>
<dbReference type="GO" id="GO:0007283">
    <property type="term" value="P:spermatogenesis"/>
    <property type="evidence" value="ECO:0000315"/>
    <property type="project" value="MGI"/>
</dbReference>
<dbReference type="GO" id="GO:0120192">
    <property type="term" value="P:tight junction assembly"/>
    <property type="evidence" value="ECO:0007669"/>
    <property type="project" value="Ensembl"/>
</dbReference>
<dbReference type="FunFam" id="1.20.140.150:FF:000015">
    <property type="entry name" value="Claudin"/>
    <property type="match status" value="1"/>
</dbReference>
<dbReference type="Gene3D" id="1.20.140.150">
    <property type="match status" value="1"/>
</dbReference>
<dbReference type="InterPro" id="IPR006187">
    <property type="entry name" value="Claudin"/>
</dbReference>
<dbReference type="InterPro" id="IPR003555">
    <property type="entry name" value="Claudin11"/>
</dbReference>
<dbReference type="InterPro" id="IPR017974">
    <property type="entry name" value="Claudin_CS"/>
</dbReference>
<dbReference type="InterPro" id="IPR004031">
    <property type="entry name" value="PMP22/EMP/MP20/Claudin"/>
</dbReference>
<dbReference type="PANTHER" id="PTHR12002">
    <property type="entry name" value="CLAUDIN"/>
    <property type="match status" value="1"/>
</dbReference>
<dbReference type="Pfam" id="PF00822">
    <property type="entry name" value="PMP22_Claudin"/>
    <property type="match status" value="1"/>
</dbReference>
<dbReference type="PRINTS" id="PR01077">
    <property type="entry name" value="CLAUDIN"/>
</dbReference>
<dbReference type="PRINTS" id="PR01384">
    <property type="entry name" value="CLAUDIN11"/>
</dbReference>
<dbReference type="PROSITE" id="PS01346">
    <property type="entry name" value="CLAUDIN"/>
    <property type="match status" value="1"/>
</dbReference>
<proteinExistence type="evidence at protein level"/>
<reference key="1">
    <citation type="journal article" date="1996" name="Neurology">
        <title>Isolation and characterization of a novel oligodendrocyte-specific protein.</title>
        <authorList>
            <person name="Bronstein J.M."/>
            <person name="Popper P."/>
            <person name="Micevych P.E."/>
            <person name="Farber D.B."/>
        </authorList>
    </citation>
    <scope>NUCLEOTIDE SEQUENCE [MRNA]</scope>
</reference>
<reference key="2">
    <citation type="journal article" date="1999" name="J. Cell Biol.">
        <title>Claudin-11/OSP-based tight junctions of myelin sheaths in brain and Sertoli cells in testis.</title>
        <authorList>
            <person name="Morita K."/>
            <person name="Furuse M."/>
            <person name="Tsukita S."/>
        </authorList>
    </citation>
    <scope>NUCLEOTIDE SEQUENCE [MRNA]</scope>
    <source>
        <tissue>Kidney</tissue>
    </source>
</reference>
<reference key="3">
    <citation type="journal article" date="2005" name="Science">
        <title>The transcriptional landscape of the mammalian genome.</title>
        <authorList>
            <person name="Carninci P."/>
            <person name="Kasukawa T."/>
            <person name="Katayama S."/>
            <person name="Gough J."/>
            <person name="Frith M.C."/>
            <person name="Maeda N."/>
            <person name="Oyama R."/>
            <person name="Ravasi T."/>
            <person name="Lenhard B."/>
            <person name="Wells C."/>
            <person name="Kodzius R."/>
            <person name="Shimokawa K."/>
            <person name="Bajic V.B."/>
            <person name="Brenner S.E."/>
            <person name="Batalov S."/>
            <person name="Forrest A.R."/>
            <person name="Zavolan M."/>
            <person name="Davis M.J."/>
            <person name="Wilming L.G."/>
            <person name="Aidinis V."/>
            <person name="Allen J.E."/>
            <person name="Ambesi-Impiombato A."/>
            <person name="Apweiler R."/>
            <person name="Aturaliya R.N."/>
            <person name="Bailey T.L."/>
            <person name="Bansal M."/>
            <person name="Baxter L."/>
            <person name="Beisel K.W."/>
            <person name="Bersano T."/>
            <person name="Bono H."/>
            <person name="Chalk A.M."/>
            <person name="Chiu K.P."/>
            <person name="Choudhary V."/>
            <person name="Christoffels A."/>
            <person name="Clutterbuck D.R."/>
            <person name="Crowe M.L."/>
            <person name="Dalla E."/>
            <person name="Dalrymple B.P."/>
            <person name="de Bono B."/>
            <person name="Della Gatta G."/>
            <person name="di Bernardo D."/>
            <person name="Down T."/>
            <person name="Engstrom P."/>
            <person name="Fagiolini M."/>
            <person name="Faulkner G."/>
            <person name="Fletcher C.F."/>
            <person name="Fukushima T."/>
            <person name="Furuno M."/>
            <person name="Futaki S."/>
            <person name="Gariboldi M."/>
            <person name="Georgii-Hemming P."/>
            <person name="Gingeras T.R."/>
            <person name="Gojobori T."/>
            <person name="Green R.E."/>
            <person name="Gustincich S."/>
            <person name="Harbers M."/>
            <person name="Hayashi Y."/>
            <person name="Hensch T.K."/>
            <person name="Hirokawa N."/>
            <person name="Hill D."/>
            <person name="Huminiecki L."/>
            <person name="Iacono M."/>
            <person name="Ikeo K."/>
            <person name="Iwama A."/>
            <person name="Ishikawa T."/>
            <person name="Jakt M."/>
            <person name="Kanapin A."/>
            <person name="Katoh M."/>
            <person name="Kawasawa Y."/>
            <person name="Kelso J."/>
            <person name="Kitamura H."/>
            <person name="Kitano H."/>
            <person name="Kollias G."/>
            <person name="Krishnan S.P."/>
            <person name="Kruger A."/>
            <person name="Kummerfeld S.K."/>
            <person name="Kurochkin I.V."/>
            <person name="Lareau L.F."/>
            <person name="Lazarevic D."/>
            <person name="Lipovich L."/>
            <person name="Liu J."/>
            <person name="Liuni S."/>
            <person name="McWilliam S."/>
            <person name="Madan Babu M."/>
            <person name="Madera M."/>
            <person name="Marchionni L."/>
            <person name="Matsuda H."/>
            <person name="Matsuzawa S."/>
            <person name="Miki H."/>
            <person name="Mignone F."/>
            <person name="Miyake S."/>
            <person name="Morris K."/>
            <person name="Mottagui-Tabar S."/>
            <person name="Mulder N."/>
            <person name="Nakano N."/>
            <person name="Nakauchi H."/>
            <person name="Ng P."/>
            <person name="Nilsson R."/>
            <person name="Nishiguchi S."/>
            <person name="Nishikawa S."/>
            <person name="Nori F."/>
            <person name="Ohara O."/>
            <person name="Okazaki Y."/>
            <person name="Orlando V."/>
            <person name="Pang K.C."/>
            <person name="Pavan W.J."/>
            <person name="Pavesi G."/>
            <person name="Pesole G."/>
            <person name="Petrovsky N."/>
            <person name="Piazza S."/>
            <person name="Reed J."/>
            <person name="Reid J.F."/>
            <person name="Ring B.Z."/>
            <person name="Ringwald M."/>
            <person name="Rost B."/>
            <person name="Ruan Y."/>
            <person name="Salzberg S.L."/>
            <person name="Sandelin A."/>
            <person name="Schneider C."/>
            <person name="Schoenbach C."/>
            <person name="Sekiguchi K."/>
            <person name="Semple C.A."/>
            <person name="Seno S."/>
            <person name="Sessa L."/>
            <person name="Sheng Y."/>
            <person name="Shibata Y."/>
            <person name="Shimada H."/>
            <person name="Shimada K."/>
            <person name="Silva D."/>
            <person name="Sinclair B."/>
            <person name="Sperling S."/>
            <person name="Stupka E."/>
            <person name="Sugiura K."/>
            <person name="Sultana R."/>
            <person name="Takenaka Y."/>
            <person name="Taki K."/>
            <person name="Tammoja K."/>
            <person name="Tan S.L."/>
            <person name="Tang S."/>
            <person name="Taylor M.S."/>
            <person name="Tegner J."/>
            <person name="Teichmann S.A."/>
            <person name="Ueda H.R."/>
            <person name="van Nimwegen E."/>
            <person name="Verardo R."/>
            <person name="Wei C.L."/>
            <person name="Yagi K."/>
            <person name="Yamanishi H."/>
            <person name="Zabarovsky E."/>
            <person name="Zhu S."/>
            <person name="Zimmer A."/>
            <person name="Hide W."/>
            <person name="Bult C."/>
            <person name="Grimmond S.M."/>
            <person name="Teasdale R.D."/>
            <person name="Liu E.T."/>
            <person name="Brusic V."/>
            <person name="Quackenbush J."/>
            <person name="Wahlestedt C."/>
            <person name="Mattick J.S."/>
            <person name="Hume D.A."/>
            <person name="Kai C."/>
            <person name="Sasaki D."/>
            <person name="Tomaru Y."/>
            <person name="Fukuda S."/>
            <person name="Kanamori-Katayama M."/>
            <person name="Suzuki M."/>
            <person name="Aoki J."/>
            <person name="Arakawa T."/>
            <person name="Iida J."/>
            <person name="Imamura K."/>
            <person name="Itoh M."/>
            <person name="Kato T."/>
            <person name="Kawaji H."/>
            <person name="Kawagashira N."/>
            <person name="Kawashima T."/>
            <person name="Kojima M."/>
            <person name="Kondo S."/>
            <person name="Konno H."/>
            <person name="Nakano K."/>
            <person name="Ninomiya N."/>
            <person name="Nishio T."/>
            <person name="Okada M."/>
            <person name="Plessy C."/>
            <person name="Shibata K."/>
            <person name="Shiraki T."/>
            <person name="Suzuki S."/>
            <person name="Tagami M."/>
            <person name="Waki K."/>
            <person name="Watahiki A."/>
            <person name="Okamura-Oho Y."/>
            <person name="Suzuki H."/>
            <person name="Kawai J."/>
            <person name="Hayashizaki Y."/>
        </authorList>
    </citation>
    <scope>NUCLEOTIDE SEQUENCE [LARGE SCALE MRNA]</scope>
    <source>
        <strain>C57BL/6J</strain>
        <tissue>Cerebellum</tissue>
    </source>
</reference>
<reference key="4">
    <citation type="journal article" date="2004" name="Genome Res.">
        <title>The status, quality, and expansion of the NIH full-length cDNA project: the Mammalian Gene Collection (MGC).</title>
        <authorList>
            <consortium name="The MGC Project Team"/>
        </authorList>
    </citation>
    <scope>NUCLEOTIDE SEQUENCE [LARGE SCALE MRNA]</scope>
    <source>
        <tissue>Salivary gland</tissue>
    </source>
</reference>
<reference key="5">
    <citation type="submission" date="2007-04" db="UniProtKB">
        <authorList>
            <person name="Lubec G."/>
            <person name="Kang S.U."/>
        </authorList>
    </citation>
    <scope>PROTEIN SEQUENCE OF 190-203</scope>
    <scope>IDENTIFICATION BY MASS SPECTROMETRY</scope>
    <source>
        <strain>C57BL/6J</strain>
        <tissue>Brain</tissue>
    </source>
</reference>
<reference key="6">
    <citation type="journal article" date="2001" name="J. Cell Biol.">
        <title>OSP/claudin-11 forms a complex with a novel member of the tetraspanin super family and beta1 integrin and regulates proliferation and migration of oligodendrocytes.</title>
        <authorList>
            <person name="Tiwari-Woodruff S.K."/>
            <person name="Buznikov A.G."/>
            <person name="Vu T.Q."/>
            <person name="Micevych P.E."/>
            <person name="Chen K."/>
            <person name="Kornblum H.I."/>
            <person name="Bronstein J.M."/>
        </authorList>
    </citation>
    <scope>INTERACTION WITH TSPAN3</scope>
</reference>
<reference key="7">
    <citation type="journal article" date="2010" name="Cell">
        <title>A tissue-specific atlas of mouse protein phosphorylation and expression.</title>
        <authorList>
            <person name="Huttlin E.L."/>
            <person name="Jedrychowski M.P."/>
            <person name="Elias J.E."/>
            <person name="Goswami T."/>
            <person name="Rad R."/>
            <person name="Beausoleil S.A."/>
            <person name="Villen J."/>
            <person name="Haas W."/>
            <person name="Sowa M.E."/>
            <person name="Gygi S.P."/>
        </authorList>
    </citation>
    <scope>PHOSPHORYLATION [LARGE SCALE ANALYSIS] AT SER-194; SER-197 AND SER-198</scope>
    <scope>IDENTIFICATION BY MASS SPECTROMETRY [LARGE SCALE ANALYSIS]</scope>
    <source>
        <tissue>Brain</tissue>
        <tissue>Testis</tissue>
    </source>
</reference>
<reference key="8">
    <citation type="journal article" date="2019" name="Cell. Mol. Life Sci.">
        <title>Tight junction proteins at the blood-brain barrier: far more than claudin-5.</title>
        <authorList>
            <person name="Berndt P."/>
            <person name="Winkler L."/>
            <person name="Cording J."/>
            <person name="Breitkreuz-Korff O."/>
            <person name="Rex A."/>
            <person name="Dithmer S."/>
            <person name="Rausch V."/>
            <person name="Blasig R."/>
            <person name="Richter M."/>
            <person name="Sporbert A."/>
            <person name="Wolburg H."/>
            <person name="Blasig I.E."/>
            <person name="Haseloff R.F."/>
        </authorList>
    </citation>
    <scope>SUBCELLULAR LOCATION</scope>
</reference>
<sequence>MVATCLQVVGFVTSFVGWIGIIVTTSTNDWVVTCSYTIPTCRKMDELGSKGLWADCVMATGLYHCKPLVDILILPGYVQACRALMIAASVLGLPAILLLLTVLPCIRMGHEPGVAKYRRAQLAGVLLILLALCAIVATIWFPVCAHREITIVSFGYSLYAGWIGAVMCLVGGCVIVCCSGDAQSFGENRFYYSSGSSSPTHAKSAHV</sequence>